<organism>
    <name type="scientific">Blepharisma japonicum</name>
    <dbReference type="NCBI Taxonomy" id="5961"/>
    <lineage>
        <taxon>Eukaryota</taxon>
        <taxon>Sar</taxon>
        <taxon>Alveolata</taxon>
        <taxon>Ciliophora</taxon>
        <taxon>Postciliodesmatophora</taxon>
        <taxon>Heterotrichea</taxon>
        <taxon>Heterotrichida</taxon>
        <taxon>Blepharismidae</taxon>
        <taxon>Blepharisma</taxon>
    </lineage>
</organism>
<feature type="initiator methionine" description="Removed" evidence="3">
    <location>
        <position position="1"/>
    </location>
</feature>
<feature type="chain" id="PRO_0000158286" description="Histone H4-1">
    <location>
        <begin position="2"/>
        <end position="98" status="greater than"/>
    </location>
</feature>
<feature type="region of interest" description="Disordered" evidence="2">
    <location>
        <begin position="1"/>
        <end position="20"/>
    </location>
</feature>
<feature type="compositionally biased region" description="Gly residues" evidence="2">
    <location>
        <begin position="1"/>
        <end position="14"/>
    </location>
</feature>
<feature type="non-terminal residue">
    <location>
        <position position="98"/>
    </location>
</feature>
<keyword id="KW-0158">Chromosome</keyword>
<keyword id="KW-0903">Direct protein sequencing</keyword>
<keyword id="KW-0238">DNA-binding</keyword>
<keyword id="KW-0544">Nucleosome core</keyword>
<keyword id="KW-0539">Nucleus</keyword>
<protein>
    <recommendedName>
        <fullName>Histone H4-1</fullName>
    </recommendedName>
</protein>
<dbReference type="EMBL" id="X97995">
    <property type="protein sequence ID" value="CAA66634.1"/>
    <property type="molecule type" value="Genomic_DNA"/>
</dbReference>
<dbReference type="SMR" id="P80737"/>
<dbReference type="GO" id="GO:0000786">
    <property type="term" value="C:nucleosome"/>
    <property type="evidence" value="ECO:0007669"/>
    <property type="project" value="UniProtKB-KW"/>
</dbReference>
<dbReference type="GO" id="GO:0005634">
    <property type="term" value="C:nucleus"/>
    <property type="evidence" value="ECO:0007669"/>
    <property type="project" value="UniProtKB-SubCell"/>
</dbReference>
<dbReference type="GO" id="GO:0003677">
    <property type="term" value="F:DNA binding"/>
    <property type="evidence" value="ECO:0007669"/>
    <property type="project" value="UniProtKB-KW"/>
</dbReference>
<dbReference type="GO" id="GO:0046982">
    <property type="term" value="F:protein heterodimerization activity"/>
    <property type="evidence" value="ECO:0007669"/>
    <property type="project" value="InterPro"/>
</dbReference>
<dbReference type="GO" id="GO:0030527">
    <property type="term" value="F:structural constituent of chromatin"/>
    <property type="evidence" value="ECO:0007669"/>
    <property type="project" value="InterPro"/>
</dbReference>
<dbReference type="CDD" id="cd22912">
    <property type="entry name" value="HFD_H4"/>
    <property type="match status" value="1"/>
</dbReference>
<dbReference type="FunFam" id="1.10.20.10:FF:000012">
    <property type="entry name" value="Histone H4"/>
    <property type="match status" value="1"/>
</dbReference>
<dbReference type="Gene3D" id="1.10.20.10">
    <property type="entry name" value="Histone, subunit A"/>
    <property type="match status" value="1"/>
</dbReference>
<dbReference type="InterPro" id="IPR035425">
    <property type="entry name" value="CENP-T/H4_C"/>
</dbReference>
<dbReference type="InterPro" id="IPR009072">
    <property type="entry name" value="Histone-fold"/>
</dbReference>
<dbReference type="InterPro" id="IPR001951">
    <property type="entry name" value="Histone_H4"/>
</dbReference>
<dbReference type="PANTHER" id="PTHR10484">
    <property type="entry name" value="HISTONE H4"/>
    <property type="match status" value="1"/>
</dbReference>
<dbReference type="Pfam" id="PF15511">
    <property type="entry name" value="CENP-T_C"/>
    <property type="match status" value="1"/>
</dbReference>
<dbReference type="PRINTS" id="PR00623">
    <property type="entry name" value="HISTONEH4"/>
</dbReference>
<dbReference type="SMART" id="SM00417">
    <property type="entry name" value="H4"/>
    <property type="match status" value="1"/>
</dbReference>
<dbReference type="SUPFAM" id="SSF47113">
    <property type="entry name" value="Histone-fold"/>
    <property type="match status" value="1"/>
</dbReference>
<comment type="function">
    <text>Core component of nucleosome. Nucleosomes wrap and compact DNA into chromatin, limiting DNA accessibility to the cellular machineries which require DNA as a template. Histones thereby play a central role in transcription regulation, DNA repair, DNA replication and chromosomal stability. DNA accessibility is regulated via a complex set of post-translational modifications of histones, also called histone code, and nucleosome remodeling.</text>
</comment>
<comment type="subunit">
    <text>The nucleosome is a histone octamer containing two molecules each of H2A, H2B, H3 and H4 assembled in one H3-H4 heterotetramer and two H2A-H2B heterodimers. The octamer wraps approximately 147 bp of DNA.</text>
</comment>
<comment type="subcellular location">
    <subcellularLocation>
        <location evidence="1">Nucleus</location>
    </subcellularLocation>
    <subcellularLocation>
        <location evidence="1">Chromosome</location>
    </subcellularLocation>
</comment>
<comment type="similarity">
    <text evidence="4">Belongs to the histone H4 family.</text>
</comment>
<name>H41_BLEJA</name>
<sequence length="98" mass="10853">MGGKGGKGGKGLGKVGAKKRHRRVIRENIQGITKPAIRRLARRGGVKRTLSGLVYDETRNVLKVFLENVVRDAVTYTEHARRKTVTALDVVYALKRQG</sequence>
<reference key="1">
    <citation type="journal article" date="1997" name="FEMS Microbiol. Lett.">
        <title>H4 histone in the macronucleus of Blepharisma japonicum (Protozoa, Ciliophora, Heterotrichida).</title>
        <authorList>
            <person name="Salvini M."/>
            <person name="Bini E."/>
            <person name="Santucci A."/>
            <person name="Batistoni R."/>
        </authorList>
    </citation>
    <scope>PROTEIN SEQUENCE OF 2-47</scope>
    <scope>NUCLEOTIDE SEQUENCE OF 10-98</scope>
    <source>
        <strain>A5-3</strain>
    </source>
</reference>
<proteinExistence type="evidence at protein level"/>
<accession>P80737</accession>
<accession>P90515</accession>
<evidence type="ECO:0000250" key="1"/>
<evidence type="ECO:0000256" key="2">
    <source>
        <dbReference type="SAM" id="MobiDB-lite"/>
    </source>
</evidence>
<evidence type="ECO:0000269" key="3">
    <source>
    </source>
</evidence>
<evidence type="ECO:0000305" key="4"/>